<sequence>MQQETTDTQEYQLAMESFLKGGGTIAMLNEISSDTLEQLYSLAFNQYQSGKYEDAHKVFQALCVLDHYDSRFFLGLGACRQAMGQYDLAIHSYSYGAIMDIKEPRFPFHAAECLLQKGELAEAESGLFLAQELIADKPEFKELSTRVSSMLEAIKLKKEMEHECVDNP</sequence>
<comment type="function">
    <text>Mediates the negative regulation of the lcrGVH operon by ATP or calcium. Acts as a modulator of the yop operon expression.</text>
</comment>
<comment type="similarity">
    <text evidence="1">Belongs to the LcrH/SycD chaperone family.</text>
</comment>
<reference key="1">
    <citation type="journal article" date="1991" name="J. Bacteriol.">
        <title>Analysis of the V antigen lcrGVH-yopBD operon of Yersinia pseudotuberculosis: evidence for a regulatory role of LcrH and LcrV.</title>
        <authorList>
            <person name="Bergman T."/>
            <person name="Haakansson S."/>
            <person name="Forsberg A."/>
            <person name="Norlander L."/>
            <person name="Macellaro A."/>
            <person name="Baeckman A."/>
            <person name="Boelin I."/>
            <person name="Wolf-Watz H."/>
        </authorList>
    </citation>
    <scope>NUCLEOTIDE SEQUENCE [GENOMIC DNA]</scope>
    <source>
        <strain>YPIII / Serotype O:3</strain>
        <plasmid>pIB1</plasmid>
    </source>
</reference>
<reference key="2">
    <citation type="journal article" date="2004" name="Proc. Natl. Acad. Sci. U.S.A.">
        <title>Insights into the evolution of Yersinia pestis through whole-genome comparison with Yersinia pseudotuberculosis.</title>
        <authorList>
            <person name="Chain P.S.G."/>
            <person name="Carniel E."/>
            <person name="Larimer F.W."/>
            <person name="Lamerdin J."/>
            <person name="Stoutland P.O."/>
            <person name="Regala W.M."/>
            <person name="Georgescu A.M."/>
            <person name="Vergez L.M."/>
            <person name="Land M.L."/>
            <person name="Motin V.L."/>
            <person name="Brubaker R.R."/>
            <person name="Fowler J."/>
            <person name="Hinnebusch J."/>
            <person name="Marceau M."/>
            <person name="Medigue C."/>
            <person name="Simonet M."/>
            <person name="Chenal-Francisque V."/>
            <person name="Souza B."/>
            <person name="Dacheux D."/>
            <person name="Elliott J.M."/>
            <person name="Derbise A."/>
            <person name="Hauser L.J."/>
            <person name="Garcia E."/>
        </authorList>
    </citation>
    <scope>NUCLEOTIDE SEQUENCE [LARGE SCALE GENOMIC DNA]</scope>
    <source>
        <strain>IP32953</strain>
        <plasmid>pYV</plasmid>
    </source>
</reference>
<feature type="chain" id="PRO_0000206486" description="Low calcium response locus protein H">
    <location>
        <begin position="1"/>
        <end position="168"/>
    </location>
</feature>
<evidence type="ECO:0000305" key="1"/>
<geneLocation type="plasmid">
    <name>pIB1</name>
</geneLocation>
<geneLocation type="plasmid">
    <name>pYV</name>
</geneLocation>
<protein>
    <recommendedName>
        <fullName>Low calcium response locus protein H</fullName>
    </recommendedName>
</protein>
<keyword id="KW-0143">Chaperone</keyword>
<keyword id="KW-0614">Plasmid</keyword>
<dbReference type="EMBL" id="M57893">
    <property type="protein sequence ID" value="AAA27646.1"/>
    <property type="molecule type" value="Genomic_DNA"/>
</dbReference>
<dbReference type="EMBL" id="BX936399">
    <property type="protein sequence ID" value="CAF25399.1"/>
    <property type="molecule type" value="Genomic_DNA"/>
</dbReference>
<dbReference type="PIR" id="C37314">
    <property type="entry name" value="C37314"/>
</dbReference>
<dbReference type="RefSeq" id="WP_011117633.1">
    <property type="nucleotide sequence ID" value="NC_006153.2"/>
</dbReference>
<dbReference type="SMR" id="P23995"/>
<dbReference type="KEGG" id="ypo:BZ17_4277"/>
<dbReference type="KEGG" id="yps:pYV0056"/>
<dbReference type="PATRIC" id="fig|273123.14.peg.4513"/>
<dbReference type="Proteomes" id="UP000001011">
    <property type="component" value="Plasmid pYV"/>
</dbReference>
<dbReference type="Gene3D" id="1.25.40.10">
    <property type="entry name" value="Tetratricopeptide repeat domain"/>
    <property type="match status" value="1"/>
</dbReference>
<dbReference type="InterPro" id="IPR005415">
    <property type="entry name" value="T3SS_Ca_resp_chp_LcrH/SycD"/>
</dbReference>
<dbReference type="InterPro" id="IPR016379">
    <property type="entry name" value="T3SS_Ca_resp_chp_LcrH/SycD_sub"/>
</dbReference>
<dbReference type="InterPro" id="IPR011716">
    <property type="entry name" value="TPR-3"/>
</dbReference>
<dbReference type="InterPro" id="IPR011990">
    <property type="entry name" value="TPR-like_helical_dom_sf"/>
</dbReference>
<dbReference type="NCBIfam" id="TIGR02552">
    <property type="entry name" value="LcrH_SycD"/>
    <property type="match status" value="1"/>
</dbReference>
<dbReference type="Pfam" id="PF07720">
    <property type="entry name" value="TPR_3"/>
    <property type="match status" value="1"/>
</dbReference>
<dbReference type="PIRSF" id="PIRSF003165">
    <property type="entry name" value="Chaperone_SicA"/>
    <property type="match status" value="1"/>
</dbReference>
<dbReference type="PRINTS" id="PR01595">
    <property type="entry name" value="SYCDCHAPRONE"/>
</dbReference>
<dbReference type="SUPFAM" id="SSF48452">
    <property type="entry name" value="TPR-like"/>
    <property type="match status" value="1"/>
</dbReference>
<dbReference type="PROSITE" id="PS50293">
    <property type="entry name" value="TPR_REGION"/>
    <property type="match status" value="1"/>
</dbReference>
<proteinExistence type="inferred from homology"/>
<gene>
    <name type="primary">lcrH</name>
    <name type="ordered locus">pYV0056</name>
</gene>
<name>LCRH_YERPS</name>
<organism>
    <name type="scientific">Yersinia pseudotuberculosis serotype I (strain IP32953)</name>
    <dbReference type="NCBI Taxonomy" id="273123"/>
    <lineage>
        <taxon>Bacteria</taxon>
        <taxon>Pseudomonadati</taxon>
        <taxon>Pseudomonadota</taxon>
        <taxon>Gammaproteobacteria</taxon>
        <taxon>Enterobacterales</taxon>
        <taxon>Yersiniaceae</taxon>
        <taxon>Yersinia</taxon>
    </lineage>
</organism>
<accession>P23995</accession>
<accession>Q663L0</accession>